<organism>
    <name type="scientific">Mycoplasma pneumoniae (strain ATCC 29342 / M129 / Subtype 1)</name>
    <name type="common">Mycoplasmoides pneumoniae</name>
    <dbReference type="NCBI Taxonomy" id="272634"/>
    <lineage>
        <taxon>Bacteria</taxon>
        <taxon>Bacillati</taxon>
        <taxon>Mycoplasmatota</taxon>
        <taxon>Mycoplasmoidales</taxon>
        <taxon>Mycoplasmoidaceae</taxon>
        <taxon>Mycoplasmoides</taxon>
    </lineage>
</organism>
<sequence>MKKIQVVVKDPVGIHARPASIIAGEANKFKSELKLVSPSGVEGNIKSIINLMSLGIKQNDHITIKAEGTDEEEALNAIKAVLEKHQVI</sequence>
<proteinExistence type="evidence at protein level"/>
<reference key="1">
    <citation type="journal article" date="1996" name="Nucleic Acids Res.">
        <title>Complete sequence analysis of the genome of the bacterium Mycoplasma pneumoniae.</title>
        <authorList>
            <person name="Himmelreich R."/>
            <person name="Hilbert H."/>
            <person name="Plagens H."/>
            <person name="Pirkl E."/>
            <person name="Li B.-C."/>
            <person name="Herrmann R."/>
        </authorList>
    </citation>
    <scope>NUCLEOTIDE SEQUENCE [LARGE SCALE GENOMIC DNA]</scope>
    <source>
        <strain>ATCC 29342 / M129 / Subtype 1</strain>
    </source>
</reference>
<reference key="2">
    <citation type="journal article" date="2000" name="Electrophoresis">
        <title>Towards a two-dimensional proteome map of Mycoplasma pneumoniae.</title>
        <authorList>
            <person name="Regula J.T."/>
            <person name="Ueberle B."/>
            <person name="Boguth G."/>
            <person name="Goerg A."/>
            <person name="Schnoelzer M."/>
            <person name="Herrmann R."/>
            <person name="Frank R."/>
        </authorList>
    </citation>
    <scope>PARTIAL PROTEIN SEQUENCE</scope>
    <scope>IDENTIFICATION BY MASS SPECTROMETRY</scope>
    <source>
        <strain>ATCC 29342 / M129 / Subtype 1</strain>
    </source>
</reference>
<reference key="3">
    <citation type="journal article" date="2002" name="Microbiology">
        <title>A novel mode of control of Mycoplasma pneumoniae HPr kinase/phosphatase activity reflects its parasitic lifestyle.</title>
        <authorList>
            <person name="Steinhauer K."/>
            <person name="Jepp T."/>
            <person name="Hillen W."/>
            <person name="Stuelke J."/>
        </authorList>
    </citation>
    <scope>PHOSPHORYLATION</scope>
</reference>
<reference key="4">
    <citation type="journal article" date="2004" name="Proteomics">
        <title>Proteogenomic mapping as a complementary method to perform genome annotation.</title>
        <authorList>
            <person name="Jaffe J.D."/>
            <person name="Berg H.C."/>
            <person name="Church G.M."/>
        </authorList>
    </citation>
    <scope>PHOSPHORYLATION AT SER-47</scope>
    <scope>IDENTIFICATION BY MASS SPECTROMETRY</scope>
</reference>
<name>PTHP_MYCPN</name>
<accession>P75061</accession>
<gene>
    <name type="primary">ptsH</name>
    <name type="ordered locus">MPN_053</name>
    <name type="ORF">MP101</name>
</gene>
<feature type="chain" id="PRO_0000107864" description="Phosphocarrier protein HPr">
    <location>
        <begin position="1"/>
        <end position="88"/>
    </location>
</feature>
<feature type="domain" description="HPr" evidence="2">
    <location>
        <begin position="1"/>
        <end position="88"/>
    </location>
</feature>
<feature type="active site" description="Pros-phosphohistidine intermediate" evidence="2">
    <location>
        <position position="15"/>
    </location>
</feature>
<feature type="modified residue" description="Phosphoserine; by HPrK/P" evidence="2 3">
    <location>
        <position position="47"/>
    </location>
</feature>
<evidence type="ECO:0000250" key="1"/>
<evidence type="ECO:0000255" key="2">
    <source>
        <dbReference type="PROSITE-ProRule" id="PRU00681"/>
    </source>
</evidence>
<evidence type="ECO:0000269" key="3">
    <source>
    </source>
</evidence>
<evidence type="ECO:0000305" key="4"/>
<comment type="function">
    <text>General (non sugar-specific) component of the phosphoenolpyruvate-dependent sugar phosphotransferase system (sugar PTS). This major carbohydrate active-transport system catalyzes the phosphorylation of incoming sugar substrates concomitantly with their translocation across the cell membrane. The phosphoryl group from phosphoenolpyruvate (PEP) is transferred to the phosphoryl carrier protein HPr by enzyme I. Phospho-HPr then transfers it to the PTS EIIA domain.</text>
</comment>
<comment type="function">
    <text evidence="1">P-Ser-HPr interacts with the catabolite control protein A (CcpA), forming a complex that binds to DNA at the catabolite response elements cre, operator sites preceding a large number of catabolite-regulated genes. Thus, P-Ser-HPr is a corepressor in carbon catabolite repression (CCR), a mechanism that allows bacteria to coordinate and optimize the utilization of available carbon sources. P-Ser-HPr also plays a role in inducer exclusion, in which it probably interacts with several non-PTS permeases and inhibits their transport activity (By similarity).</text>
</comment>
<comment type="activity regulation">
    <text evidence="1">Phosphorylation on Ser-47 inhibits the phosphoryl transfer from enzyme I to HPr.</text>
</comment>
<comment type="subcellular location">
    <subcellularLocation>
        <location evidence="1">Cytoplasm</location>
    </subcellularLocation>
</comment>
<comment type="similarity">
    <text evidence="4">Belongs to the HPr family.</text>
</comment>
<protein>
    <recommendedName>
        <fullName>Phosphocarrier protein HPr</fullName>
    </recommendedName>
    <alternativeName>
        <fullName>Histidine-containing protein</fullName>
    </alternativeName>
</protein>
<keyword id="KW-0963">Cytoplasm</keyword>
<keyword id="KW-0903">Direct protein sequencing</keyword>
<keyword id="KW-0597">Phosphoprotein</keyword>
<keyword id="KW-0598">Phosphotransferase system</keyword>
<keyword id="KW-1185">Reference proteome</keyword>
<keyword id="KW-0762">Sugar transport</keyword>
<keyword id="KW-0804">Transcription</keyword>
<keyword id="KW-0805">Transcription regulation</keyword>
<keyword id="KW-0813">Transport</keyword>
<dbReference type="EMBL" id="U00089">
    <property type="protein sequence ID" value="AAB95749.1"/>
    <property type="molecule type" value="Genomic_DNA"/>
</dbReference>
<dbReference type="PIR" id="S73427">
    <property type="entry name" value="S73427"/>
</dbReference>
<dbReference type="RefSeq" id="NP_109741.1">
    <property type="nucleotide sequence ID" value="NC_000912.1"/>
</dbReference>
<dbReference type="RefSeq" id="WP_010874410.1">
    <property type="nucleotide sequence ID" value="NZ_OU342337.1"/>
</dbReference>
<dbReference type="SMR" id="P75061"/>
<dbReference type="STRING" id="272634.MPN_053"/>
<dbReference type="iPTMnet" id="P75061"/>
<dbReference type="EnsemblBacteria" id="AAB95749">
    <property type="protein sequence ID" value="AAB95749"/>
    <property type="gene ID" value="MPN_053"/>
</dbReference>
<dbReference type="GeneID" id="66609308"/>
<dbReference type="KEGG" id="mpn:MPN_053"/>
<dbReference type="PATRIC" id="fig|272634.6.peg.53"/>
<dbReference type="HOGENOM" id="CLU_136230_2_3_14"/>
<dbReference type="OrthoDB" id="9809047at2"/>
<dbReference type="BioCyc" id="MPNE272634:G1GJ3-78-MONOMER"/>
<dbReference type="Proteomes" id="UP000000808">
    <property type="component" value="Chromosome"/>
</dbReference>
<dbReference type="GO" id="GO:0005737">
    <property type="term" value="C:cytoplasm"/>
    <property type="evidence" value="ECO:0007669"/>
    <property type="project" value="UniProtKB-SubCell"/>
</dbReference>
<dbReference type="GO" id="GO:0009401">
    <property type="term" value="P:phosphoenolpyruvate-dependent sugar phosphotransferase system"/>
    <property type="evidence" value="ECO:0007669"/>
    <property type="project" value="UniProtKB-KW"/>
</dbReference>
<dbReference type="CDD" id="cd00367">
    <property type="entry name" value="PTS-HPr_like"/>
    <property type="match status" value="1"/>
</dbReference>
<dbReference type="Gene3D" id="3.30.1340.10">
    <property type="entry name" value="HPr-like"/>
    <property type="match status" value="1"/>
</dbReference>
<dbReference type="InterPro" id="IPR050399">
    <property type="entry name" value="HPr"/>
</dbReference>
<dbReference type="InterPro" id="IPR000032">
    <property type="entry name" value="HPr-like"/>
</dbReference>
<dbReference type="InterPro" id="IPR035895">
    <property type="entry name" value="HPr-like_sf"/>
</dbReference>
<dbReference type="InterPro" id="IPR001020">
    <property type="entry name" value="PTS_HPr_His_P_site"/>
</dbReference>
<dbReference type="InterPro" id="IPR002114">
    <property type="entry name" value="PTS_HPr_Ser_P_site"/>
</dbReference>
<dbReference type="NCBIfam" id="TIGR01003">
    <property type="entry name" value="PTS_HPr_family"/>
    <property type="match status" value="1"/>
</dbReference>
<dbReference type="PANTHER" id="PTHR33705">
    <property type="entry name" value="PHOSPHOCARRIER PROTEIN HPR"/>
    <property type="match status" value="1"/>
</dbReference>
<dbReference type="PANTHER" id="PTHR33705:SF2">
    <property type="entry name" value="PHOSPHOCARRIER PROTEIN NPR"/>
    <property type="match status" value="1"/>
</dbReference>
<dbReference type="Pfam" id="PF00381">
    <property type="entry name" value="PTS-HPr"/>
    <property type="match status" value="1"/>
</dbReference>
<dbReference type="PRINTS" id="PR00107">
    <property type="entry name" value="PHOSPHOCPHPR"/>
</dbReference>
<dbReference type="SUPFAM" id="SSF55594">
    <property type="entry name" value="HPr-like"/>
    <property type="match status" value="1"/>
</dbReference>
<dbReference type="PROSITE" id="PS51350">
    <property type="entry name" value="PTS_HPR_DOM"/>
    <property type="match status" value="1"/>
</dbReference>
<dbReference type="PROSITE" id="PS00369">
    <property type="entry name" value="PTS_HPR_HIS"/>
    <property type="match status" value="1"/>
</dbReference>
<dbReference type="PROSITE" id="PS00589">
    <property type="entry name" value="PTS_HPR_SER"/>
    <property type="match status" value="1"/>
</dbReference>